<name>KDPB_BACMK</name>
<accession>A9VFM1</accession>
<keyword id="KW-0067">ATP-binding</keyword>
<keyword id="KW-1003">Cell membrane</keyword>
<keyword id="KW-0406">Ion transport</keyword>
<keyword id="KW-0460">Magnesium</keyword>
<keyword id="KW-0472">Membrane</keyword>
<keyword id="KW-0479">Metal-binding</keyword>
<keyword id="KW-0547">Nucleotide-binding</keyword>
<keyword id="KW-0597">Phosphoprotein</keyword>
<keyword id="KW-0630">Potassium</keyword>
<keyword id="KW-0633">Potassium transport</keyword>
<keyword id="KW-1278">Translocase</keyword>
<keyword id="KW-0812">Transmembrane</keyword>
<keyword id="KW-1133">Transmembrane helix</keyword>
<keyword id="KW-0813">Transport</keyword>
<proteinExistence type="inferred from homology"/>
<reference key="1">
    <citation type="journal article" date="2008" name="Chem. Biol. Interact.">
        <title>Extending the Bacillus cereus group genomics to putative food-borne pathogens of different toxicity.</title>
        <authorList>
            <person name="Lapidus A."/>
            <person name="Goltsman E."/>
            <person name="Auger S."/>
            <person name="Galleron N."/>
            <person name="Segurens B."/>
            <person name="Dossat C."/>
            <person name="Land M.L."/>
            <person name="Broussolle V."/>
            <person name="Brillard J."/>
            <person name="Guinebretiere M.-H."/>
            <person name="Sanchis V."/>
            <person name="Nguen-the C."/>
            <person name="Lereclus D."/>
            <person name="Richardson P."/>
            <person name="Wincker P."/>
            <person name="Weissenbach J."/>
            <person name="Ehrlich S.D."/>
            <person name="Sorokin A."/>
        </authorList>
    </citation>
    <scope>NUCLEOTIDE SEQUENCE [LARGE SCALE GENOMIC DNA]</scope>
    <source>
        <strain>KBAB4</strain>
    </source>
</reference>
<protein>
    <recommendedName>
        <fullName evidence="1">Potassium-transporting ATPase ATP-binding subunit</fullName>
        <ecNumber evidence="1">7.2.2.6</ecNumber>
    </recommendedName>
    <alternativeName>
        <fullName evidence="1">ATP phosphohydrolase [potassium-transporting] B chain</fullName>
    </alternativeName>
    <alternativeName>
        <fullName evidence="1">Potassium-binding and translocating subunit B</fullName>
    </alternativeName>
    <alternativeName>
        <fullName evidence="1">Potassium-translocating ATPase B chain</fullName>
    </alternativeName>
</protein>
<comment type="function">
    <text evidence="1">Part of the high-affinity ATP-driven potassium transport (or Kdp) system, which catalyzes the hydrolysis of ATP coupled with the electrogenic transport of potassium into the cytoplasm. This subunit is responsible for energy coupling to the transport system and for the release of the potassium ions to the cytoplasm.</text>
</comment>
<comment type="catalytic activity">
    <reaction evidence="1">
        <text>K(+)(out) + ATP + H2O = K(+)(in) + ADP + phosphate + H(+)</text>
        <dbReference type="Rhea" id="RHEA:16777"/>
        <dbReference type="ChEBI" id="CHEBI:15377"/>
        <dbReference type="ChEBI" id="CHEBI:15378"/>
        <dbReference type="ChEBI" id="CHEBI:29103"/>
        <dbReference type="ChEBI" id="CHEBI:30616"/>
        <dbReference type="ChEBI" id="CHEBI:43474"/>
        <dbReference type="ChEBI" id="CHEBI:456216"/>
        <dbReference type="EC" id="7.2.2.6"/>
    </reaction>
    <physiologicalReaction direction="left-to-right" evidence="1">
        <dbReference type="Rhea" id="RHEA:16778"/>
    </physiologicalReaction>
</comment>
<comment type="subunit">
    <text evidence="1">The system is composed of three essential subunits: KdpA, KdpB and KdpC.</text>
</comment>
<comment type="subcellular location">
    <subcellularLocation>
        <location evidence="1">Cell membrane</location>
        <topology evidence="1">Multi-pass membrane protein</topology>
    </subcellularLocation>
</comment>
<comment type="similarity">
    <text evidence="1">Belongs to the cation transport ATPase (P-type) (TC 3.A.3) family. Type IA subfamily.</text>
</comment>
<organism>
    <name type="scientific">Bacillus mycoides (strain KBAB4)</name>
    <name type="common">Bacillus weihenstephanensis</name>
    <dbReference type="NCBI Taxonomy" id="315730"/>
    <lineage>
        <taxon>Bacteria</taxon>
        <taxon>Bacillati</taxon>
        <taxon>Bacillota</taxon>
        <taxon>Bacilli</taxon>
        <taxon>Bacillales</taxon>
        <taxon>Bacillaceae</taxon>
        <taxon>Bacillus</taxon>
        <taxon>Bacillus cereus group</taxon>
    </lineage>
</organism>
<dbReference type="EC" id="7.2.2.6" evidence="1"/>
<dbReference type="EMBL" id="CP000903">
    <property type="protein sequence ID" value="ABY41917.1"/>
    <property type="molecule type" value="Genomic_DNA"/>
</dbReference>
<dbReference type="SMR" id="A9VFM1"/>
<dbReference type="KEGG" id="bwe:BcerKBAB4_0655"/>
<dbReference type="eggNOG" id="COG2216">
    <property type="taxonomic scope" value="Bacteria"/>
</dbReference>
<dbReference type="HOGENOM" id="CLU_025728_2_0_9"/>
<dbReference type="Proteomes" id="UP000002154">
    <property type="component" value="Chromosome"/>
</dbReference>
<dbReference type="GO" id="GO:0005886">
    <property type="term" value="C:plasma membrane"/>
    <property type="evidence" value="ECO:0007669"/>
    <property type="project" value="UniProtKB-SubCell"/>
</dbReference>
<dbReference type="GO" id="GO:0005524">
    <property type="term" value="F:ATP binding"/>
    <property type="evidence" value="ECO:0007669"/>
    <property type="project" value="UniProtKB-UniRule"/>
</dbReference>
<dbReference type="GO" id="GO:0016887">
    <property type="term" value="F:ATP hydrolysis activity"/>
    <property type="evidence" value="ECO:0007669"/>
    <property type="project" value="InterPro"/>
</dbReference>
<dbReference type="GO" id="GO:0000287">
    <property type="term" value="F:magnesium ion binding"/>
    <property type="evidence" value="ECO:0007669"/>
    <property type="project" value="UniProtKB-UniRule"/>
</dbReference>
<dbReference type="GO" id="GO:0008556">
    <property type="term" value="F:P-type potassium transmembrane transporter activity"/>
    <property type="evidence" value="ECO:0007669"/>
    <property type="project" value="UniProtKB-UniRule"/>
</dbReference>
<dbReference type="CDD" id="cd02078">
    <property type="entry name" value="P-type_ATPase_K"/>
    <property type="match status" value="1"/>
</dbReference>
<dbReference type="FunFam" id="2.70.150.10:FF:000010">
    <property type="entry name" value="Potassium-transporting ATPase ATP-binding subunit"/>
    <property type="match status" value="1"/>
</dbReference>
<dbReference type="FunFam" id="3.40.1110.10:FF:000007">
    <property type="entry name" value="Potassium-transporting ATPase ATP-binding subunit"/>
    <property type="match status" value="1"/>
</dbReference>
<dbReference type="Gene3D" id="3.40.1110.10">
    <property type="entry name" value="Calcium-transporting ATPase, cytoplasmic domain N"/>
    <property type="match status" value="1"/>
</dbReference>
<dbReference type="Gene3D" id="2.70.150.10">
    <property type="entry name" value="Calcium-transporting ATPase, cytoplasmic transduction domain A"/>
    <property type="match status" value="1"/>
</dbReference>
<dbReference type="Gene3D" id="3.40.50.1000">
    <property type="entry name" value="HAD superfamily/HAD-like"/>
    <property type="match status" value="1"/>
</dbReference>
<dbReference type="HAMAP" id="MF_00285">
    <property type="entry name" value="KdpB"/>
    <property type="match status" value="1"/>
</dbReference>
<dbReference type="InterPro" id="IPR023299">
    <property type="entry name" value="ATPase_P-typ_cyto_dom_N"/>
</dbReference>
<dbReference type="InterPro" id="IPR018303">
    <property type="entry name" value="ATPase_P-typ_P_site"/>
</dbReference>
<dbReference type="InterPro" id="IPR023298">
    <property type="entry name" value="ATPase_P-typ_TM_dom_sf"/>
</dbReference>
<dbReference type="InterPro" id="IPR008250">
    <property type="entry name" value="ATPase_P-typ_transduc_dom_A_sf"/>
</dbReference>
<dbReference type="InterPro" id="IPR036412">
    <property type="entry name" value="HAD-like_sf"/>
</dbReference>
<dbReference type="InterPro" id="IPR023214">
    <property type="entry name" value="HAD_sf"/>
</dbReference>
<dbReference type="InterPro" id="IPR006391">
    <property type="entry name" value="P-type_ATPase_bsu_IA"/>
</dbReference>
<dbReference type="InterPro" id="IPR001757">
    <property type="entry name" value="P_typ_ATPase"/>
</dbReference>
<dbReference type="InterPro" id="IPR044492">
    <property type="entry name" value="P_typ_ATPase_HD_dom"/>
</dbReference>
<dbReference type="NCBIfam" id="TIGR01494">
    <property type="entry name" value="ATPase_P-type"/>
    <property type="match status" value="2"/>
</dbReference>
<dbReference type="NCBIfam" id="TIGR01497">
    <property type="entry name" value="kdpB"/>
    <property type="match status" value="1"/>
</dbReference>
<dbReference type="PANTHER" id="PTHR43743">
    <property type="entry name" value="POTASSIUM-TRANSPORTING ATPASE ATP-BINDING SUBUNIT"/>
    <property type="match status" value="1"/>
</dbReference>
<dbReference type="PANTHER" id="PTHR43743:SF1">
    <property type="entry name" value="POTASSIUM-TRANSPORTING ATPASE ATP-BINDING SUBUNIT"/>
    <property type="match status" value="1"/>
</dbReference>
<dbReference type="Pfam" id="PF00122">
    <property type="entry name" value="E1-E2_ATPase"/>
    <property type="match status" value="1"/>
</dbReference>
<dbReference type="Pfam" id="PF00702">
    <property type="entry name" value="Hydrolase"/>
    <property type="match status" value="1"/>
</dbReference>
<dbReference type="PRINTS" id="PR00119">
    <property type="entry name" value="CATATPASE"/>
</dbReference>
<dbReference type="SFLD" id="SFLDS00003">
    <property type="entry name" value="Haloacid_Dehalogenase"/>
    <property type="match status" value="1"/>
</dbReference>
<dbReference type="SFLD" id="SFLDF00027">
    <property type="entry name" value="p-type_atpase"/>
    <property type="match status" value="1"/>
</dbReference>
<dbReference type="SUPFAM" id="SSF81653">
    <property type="entry name" value="Calcium ATPase, transduction domain A"/>
    <property type="match status" value="1"/>
</dbReference>
<dbReference type="SUPFAM" id="SSF81665">
    <property type="entry name" value="Calcium ATPase, transmembrane domain M"/>
    <property type="match status" value="1"/>
</dbReference>
<dbReference type="SUPFAM" id="SSF56784">
    <property type="entry name" value="HAD-like"/>
    <property type="match status" value="1"/>
</dbReference>
<dbReference type="PROSITE" id="PS00154">
    <property type="entry name" value="ATPASE_E1_E2"/>
    <property type="match status" value="1"/>
</dbReference>
<gene>
    <name evidence="1" type="primary">kdpB</name>
    <name type="ordered locus">BcerKBAB4_0655</name>
</gene>
<sequence length="697" mass="74549">MMRPVVVKEKRVNESQIHAVEDEVRQAKTMDRDIVTHAMKQSFAKLNPKVMIKNPIMFVVEIGFIITLILSFLPSSSSSVPGWFNITVSLILLFTVLFANFAEALAEGRGKAQADSLKQSKKDVFANVVKENGDIVQVSATDLRKGDIVIVKQGEMIPNDGEVIKGLASVDESAITGESAPVIKEAGGDFCSVTGGTMVVSDEITIVITSNPGESFIDKMISLVEGAARQKTPNEIALNTVLTSLTLIFLIVVVTLPIFTNYLGFQIDTAVLVALLVCLIPTTIGGLLSAIGIAGMDRVTKFNVLAMSGKAVEAAGDINTIILDKTGTITFGNRMAHTLLPVGNETIEQVGKWAAISSVLDETPEGRSVIEYVQTKSISYNREIAEQGEFVPFKAETRMSGVDLQDGTKVRKGAVGAVIEWVQSQGGMIPKDVNQKADLISKEGGTPLVVAVDNRIYGLIYLKDTVKPGMRERFEQLRQMGIKTVMCTGDNPLTAATIAKEAGVDEFVAECKPEDKIAVIKAEQDKGKLVAMTGDGTNDAPALAQADVGLAMNSGTTAAKEAANMIDLDSNPTKIIEVVGIGKQLLMTRGALTTFSIANDIAKYFAIIPAMFTLAIPQMEALNIMKLTSPLSAILSALIFNAVIIPLLIPLAMKGIAYKPMSSNALLSRNLLIYGLGGVIVPFIGIKVIDMIVGLFI</sequence>
<evidence type="ECO:0000255" key="1">
    <source>
        <dbReference type="HAMAP-Rule" id="MF_00285"/>
    </source>
</evidence>
<feature type="chain" id="PRO_1000114948" description="Potassium-transporting ATPase ATP-binding subunit">
    <location>
        <begin position="1"/>
        <end position="697"/>
    </location>
</feature>
<feature type="transmembrane region" description="Helical" evidence="1">
    <location>
        <begin position="55"/>
        <end position="75"/>
    </location>
</feature>
<feature type="transmembrane region" description="Helical" evidence="1">
    <location>
        <begin position="82"/>
        <end position="102"/>
    </location>
</feature>
<feature type="transmembrane region" description="Helical" evidence="1">
    <location>
        <begin position="245"/>
        <end position="265"/>
    </location>
</feature>
<feature type="transmembrane region" description="Helical" evidence="1">
    <location>
        <begin position="271"/>
        <end position="291"/>
    </location>
</feature>
<feature type="transmembrane region" description="Helical" evidence="1">
    <location>
        <begin position="605"/>
        <end position="625"/>
    </location>
</feature>
<feature type="transmembrane region" description="Helical" evidence="1">
    <location>
        <begin position="633"/>
        <end position="653"/>
    </location>
</feature>
<feature type="transmembrane region" description="Helical" evidence="1">
    <location>
        <begin position="677"/>
        <end position="697"/>
    </location>
</feature>
<feature type="active site" description="4-aspartylphosphate intermediate" evidence="1">
    <location>
        <position position="324"/>
    </location>
</feature>
<feature type="binding site" evidence="1">
    <location>
        <position position="361"/>
    </location>
    <ligand>
        <name>ATP</name>
        <dbReference type="ChEBI" id="CHEBI:30616"/>
    </ligand>
</feature>
<feature type="binding site" evidence="1">
    <location>
        <position position="365"/>
    </location>
    <ligand>
        <name>ATP</name>
        <dbReference type="ChEBI" id="CHEBI:30616"/>
    </ligand>
</feature>
<feature type="binding site" evidence="1">
    <location>
        <begin position="393"/>
        <end position="400"/>
    </location>
    <ligand>
        <name>ATP</name>
        <dbReference type="ChEBI" id="CHEBI:30616"/>
    </ligand>
</feature>
<feature type="binding site" evidence="1">
    <location>
        <position position="412"/>
    </location>
    <ligand>
        <name>ATP</name>
        <dbReference type="ChEBI" id="CHEBI:30616"/>
    </ligand>
</feature>
<feature type="binding site" evidence="1">
    <location>
        <position position="535"/>
    </location>
    <ligand>
        <name>Mg(2+)</name>
        <dbReference type="ChEBI" id="CHEBI:18420"/>
    </ligand>
</feature>
<feature type="binding site" evidence="1">
    <location>
        <position position="539"/>
    </location>
    <ligand>
        <name>Mg(2+)</name>
        <dbReference type="ChEBI" id="CHEBI:18420"/>
    </ligand>
</feature>